<comment type="function">
    <text evidence="1">Part of the phosphoribosylformylglycinamidine synthase complex involved in the purines biosynthetic pathway. Catalyzes the ATP-dependent conversion of formylglycinamide ribonucleotide (FGAR) and glutamine to yield formylglycinamidine ribonucleotide (FGAM) and glutamate. The FGAM synthase complex is composed of three subunits. PurQ produces an ammonia molecule by converting glutamine to glutamate. PurL transfers the ammonia molecule to FGAR to form FGAM in an ATP-dependent manner. PurS interacts with PurQ and PurL and is thought to assist in the transfer of the ammonia molecule from PurQ to PurL.</text>
</comment>
<comment type="catalytic activity">
    <reaction evidence="1">
        <text>N(2)-formyl-N(1)-(5-phospho-beta-D-ribosyl)glycinamide + L-glutamine + ATP + H2O = 2-formamido-N(1)-(5-O-phospho-beta-D-ribosyl)acetamidine + L-glutamate + ADP + phosphate + H(+)</text>
        <dbReference type="Rhea" id="RHEA:17129"/>
        <dbReference type="ChEBI" id="CHEBI:15377"/>
        <dbReference type="ChEBI" id="CHEBI:15378"/>
        <dbReference type="ChEBI" id="CHEBI:29985"/>
        <dbReference type="ChEBI" id="CHEBI:30616"/>
        <dbReference type="ChEBI" id="CHEBI:43474"/>
        <dbReference type="ChEBI" id="CHEBI:58359"/>
        <dbReference type="ChEBI" id="CHEBI:147286"/>
        <dbReference type="ChEBI" id="CHEBI:147287"/>
        <dbReference type="ChEBI" id="CHEBI:456216"/>
        <dbReference type="EC" id="6.3.5.3"/>
    </reaction>
</comment>
<comment type="pathway">
    <text evidence="1">Purine metabolism; IMP biosynthesis via de novo pathway; 5-amino-1-(5-phospho-D-ribosyl)imidazole from N(2)-formyl-N(1)-(5-phospho-D-ribosyl)glycinamide: step 1/2.</text>
</comment>
<comment type="subunit">
    <text evidence="1">Monomer. Part of the FGAM synthase complex composed of 1 PurL, 1 PurQ and 2 PurS subunits.</text>
</comment>
<comment type="subcellular location">
    <subcellularLocation>
        <location evidence="1">Cytoplasm</location>
    </subcellularLocation>
</comment>
<comment type="similarity">
    <text evidence="1">Belongs to the FGAMS family.</text>
</comment>
<feature type="chain" id="PRO_1000206041" description="Phosphoribosylformylglycinamidine synthase subunit PurL">
    <location>
        <begin position="1"/>
        <end position="739"/>
    </location>
</feature>
<feature type="active site" evidence="1">
    <location>
        <position position="53"/>
    </location>
</feature>
<feature type="active site" description="Proton acceptor" evidence="1">
    <location>
        <position position="99"/>
    </location>
</feature>
<feature type="binding site" evidence="1">
    <location>
        <position position="56"/>
    </location>
    <ligand>
        <name>ATP</name>
        <dbReference type="ChEBI" id="CHEBI:30616"/>
    </ligand>
</feature>
<feature type="binding site" evidence="1">
    <location>
        <position position="95"/>
    </location>
    <ligand>
        <name>ATP</name>
        <dbReference type="ChEBI" id="CHEBI:30616"/>
    </ligand>
</feature>
<feature type="binding site" evidence="1">
    <location>
        <position position="97"/>
    </location>
    <ligand>
        <name>Mg(2+)</name>
        <dbReference type="ChEBI" id="CHEBI:18420"/>
        <label>1</label>
    </ligand>
</feature>
<feature type="binding site" evidence="1">
    <location>
        <begin position="98"/>
        <end position="101"/>
    </location>
    <ligand>
        <name>substrate</name>
    </ligand>
</feature>
<feature type="binding site" evidence="1">
    <location>
        <position position="120"/>
    </location>
    <ligand>
        <name>substrate</name>
    </ligand>
</feature>
<feature type="binding site" evidence="1">
    <location>
        <position position="121"/>
    </location>
    <ligand>
        <name>Mg(2+)</name>
        <dbReference type="ChEBI" id="CHEBI:18420"/>
        <label>2</label>
    </ligand>
</feature>
<feature type="binding site" evidence="1">
    <location>
        <position position="244"/>
    </location>
    <ligand>
        <name>substrate</name>
    </ligand>
</feature>
<feature type="binding site" evidence="1">
    <location>
        <position position="274"/>
    </location>
    <ligand>
        <name>Mg(2+)</name>
        <dbReference type="ChEBI" id="CHEBI:18420"/>
        <label>2</label>
    </ligand>
</feature>
<feature type="binding site" evidence="1">
    <location>
        <begin position="318"/>
        <end position="320"/>
    </location>
    <ligand>
        <name>substrate</name>
    </ligand>
</feature>
<feature type="binding site" evidence="1">
    <location>
        <position position="501"/>
    </location>
    <ligand>
        <name>ATP</name>
        <dbReference type="ChEBI" id="CHEBI:30616"/>
    </ligand>
</feature>
<feature type="binding site" evidence="1">
    <location>
        <position position="538"/>
    </location>
    <ligand>
        <name>ATP</name>
        <dbReference type="ChEBI" id="CHEBI:30616"/>
    </ligand>
</feature>
<feature type="binding site" evidence="1">
    <location>
        <position position="539"/>
    </location>
    <ligand>
        <name>Mg(2+)</name>
        <dbReference type="ChEBI" id="CHEBI:18420"/>
        <label>1</label>
    </ligand>
</feature>
<feature type="binding site" evidence="1">
    <location>
        <position position="541"/>
    </location>
    <ligand>
        <name>substrate</name>
    </ligand>
</feature>
<dbReference type="EC" id="6.3.5.3" evidence="1"/>
<dbReference type="EMBL" id="FM242711">
    <property type="protein sequence ID" value="CAS05543.1"/>
    <property type="molecule type" value="Genomic_DNA"/>
</dbReference>
<dbReference type="RefSeq" id="WP_003731570.1">
    <property type="nucleotide sequence ID" value="NC_012488.1"/>
</dbReference>
<dbReference type="SMR" id="C1KW68"/>
<dbReference type="KEGG" id="lmc:Lm4b_01783"/>
<dbReference type="HOGENOM" id="CLU_003100_0_1_9"/>
<dbReference type="UniPathway" id="UPA00074">
    <property type="reaction ID" value="UER00128"/>
</dbReference>
<dbReference type="GO" id="GO:0005737">
    <property type="term" value="C:cytoplasm"/>
    <property type="evidence" value="ECO:0007669"/>
    <property type="project" value="UniProtKB-SubCell"/>
</dbReference>
<dbReference type="GO" id="GO:0005524">
    <property type="term" value="F:ATP binding"/>
    <property type="evidence" value="ECO:0007669"/>
    <property type="project" value="UniProtKB-UniRule"/>
</dbReference>
<dbReference type="GO" id="GO:0000287">
    <property type="term" value="F:magnesium ion binding"/>
    <property type="evidence" value="ECO:0007669"/>
    <property type="project" value="UniProtKB-UniRule"/>
</dbReference>
<dbReference type="GO" id="GO:0004642">
    <property type="term" value="F:phosphoribosylformylglycinamidine synthase activity"/>
    <property type="evidence" value="ECO:0007669"/>
    <property type="project" value="UniProtKB-UniRule"/>
</dbReference>
<dbReference type="GO" id="GO:0006189">
    <property type="term" value="P:'de novo' IMP biosynthetic process"/>
    <property type="evidence" value="ECO:0007669"/>
    <property type="project" value="UniProtKB-UniRule"/>
</dbReference>
<dbReference type="CDD" id="cd02203">
    <property type="entry name" value="PurL_repeat1"/>
    <property type="match status" value="1"/>
</dbReference>
<dbReference type="CDD" id="cd02204">
    <property type="entry name" value="PurL_repeat2"/>
    <property type="match status" value="1"/>
</dbReference>
<dbReference type="FunFam" id="3.30.1330.10:FF:000004">
    <property type="entry name" value="Phosphoribosylformylglycinamidine synthase subunit PurL"/>
    <property type="match status" value="1"/>
</dbReference>
<dbReference type="FunFam" id="3.90.650.10:FF:000009">
    <property type="entry name" value="Phosphoribosylformylglycinamidine synthase subunit PurL"/>
    <property type="match status" value="1"/>
</dbReference>
<dbReference type="FunFam" id="3.90.650.10:FF:000013">
    <property type="entry name" value="Phosphoribosylformylglycinamidine synthase subunit PurL"/>
    <property type="match status" value="1"/>
</dbReference>
<dbReference type="Gene3D" id="3.90.650.10">
    <property type="entry name" value="PurM-like C-terminal domain"/>
    <property type="match status" value="2"/>
</dbReference>
<dbReference type="Gene3D" id="3.30.1330.10">
    <property type="entry name" value="PurM-like, N-terminal domain"/>
    <property type="match status" value="2"/>
</dbReference>
<dbReference type="HAMAP" id="MF_00420">
    <property type="entry name" value="PurL_2"/>
    <property type="match status" value="1"/>
</dbReference>
<dbReference type="InterPro" id="IPR010074">
    <property type="entry name" value="PRibForGlyAmidine_synth_PurL"/>
</dbReference>
<dbReference type="InterPro" id="IPR041609">
    <property type="entry name" value="PurL_linker"/>
</dbReference>
<dbReference type="InterPro" id="IPR010918">
    <property type="entry name" value="PurM-like_C_dom"/>
</dbReference>
<dbReference type="InterPro" id="IPR036676">
    <property type="entry name" value="PurM-like_C_sf"/>
</dbReference>
<dbReference type="InterPro" id="IPR016188">
    <property type="entry name" value="PurM-like_N"/>
</dbReference>
<dbReference type="InterPro" id="IPR036921">
    <property type="entry name" value="PurM-like_N_sf"/>
</dbReference>
<dbReference type="NCBIfam" id="TIGR01736">
    <property type="entry name" value="FGAM_synth_II"/>
    <property type="match status" value="1"/>
</dbReference>
<dbReference type="NCBIfam" id="NF002290">
    <property type="entry name" value="PRK01213.1"/>
    <property type="match status" value="1"/>
</dbReference>
<dbReference type="PANTHER" id="PTHR43555">
    <property type="entry name" value="PHOSPHORIBOSYLFORMYLGLYCINAMIDINE SYNTHASE SUBUNIT PURL"/>
    <property type="match status" value="1"/>
</dbReference>
<dbReference type="PANTHER" id="PTHR43555:SF1">
    <property type="entry name" value="PHOSPHORIBOSYLFORMYLGLYCINAMIDINE SYNTHASE SUBUNIT PURL"/>
    <property type="match status" value="1"/>
</dbReference>
<dbReference type="Pfam" id="PF00586">
    <property type="entry name" value="AIRS"/>
    <property type="match status" value="2"/>
</dbReference>
<dbReference type="Pfam" id="PF02769">
    <property type="entry name" value="AIRS_C"/>
    <property type="match status" value="2"/>
</dbReference>
<dbReference type="Pfam" id="PF18072">
    <property type="entry name" value="FGAR-AT_linker"/>
    <property type="match status" value="1"/>
</dbReference>
<dbReference type="PIRSF" id="PIRSF001587">
    <property type="entry name" value="FGAM_synthase_II"/>
    <property type="match status" value="1"/>
</dbReference>
<dbReference type="SUPFAM" id="SSF56042">
    <property type="entry name" value="PurM C-terminal domain-like"/>
    <property type="match status" value="2"/>
</dbReference>
<dbReference type="SUPFAM" id="SSF55326">
    <property type="entry name" value="PurM N-terminal domain-like"/>
    <property type="match status" value="2"/>
</dbReference>
<evidence type="ECO:0000255" key="1">
    <source>
        <dbReference type="HAMAP-Rule" id="MF_00420"/>
    </source>
</evidence>
<reference key="1">
    <citation type="journal article" date="2012" name="BMC Genomics">
        <title>Comparative genomics and transcriptomics of lineages I, II, and III strains of Listeria monocytogenes.</title>
        <authorList>
            <person name="Hain T."/>
            <person name="Ghai R."/>
            <person name="Billion A."/>
            <person name="Kuenne C.T."/>
            <person name="Steinweg C."/>
            <person name="Izar B."/>
            <person name="Mohamed W."/>
            <person name="Mraheil M."/>
            <person name="Domann E."/>
            <person name="Schaffrath S."/>
            <person name="Karst U."/>
            <person name="Goesmann A."/>
            <person name="Oehm S."/>
            <person name="Puhler A."/>
            <person name="Merkl R."/>
            <person name="Vorwerk S."/>
            <person name="Glaser P."/>
            <person name="Garrido P."/>
            <person name="Rusniok C."/>
            <person name="Buchrieser C."/>
            <person name="Goebel W."/>
            <person name="Chakraborty T."/>
        </authorList>
    </citation>
    <scope>NUCLEOTIDE SEQUENCE [LARGE SCALE GENOMIC DNA]</scope>
    <source>
        <strain>CLIP80459</strain>
    </source>
</reference>
<name>PURL_LISMC</name>
<proteinExistence type="inferred from homology"/>
<organism>
    <name type="scientific">Listeria monocytogenes serotype 4b (strain CLIP80459)</name>
    <dbReference type="NCBI Taxonomy" id="568819"/>
    <lineage>
        <taxon>Bacteria</taxon>
        <taxon>Bacillati</taxon>
        <taxon>Bacillota</taxon>
        <taxon>Bacilli</taxon>
        <taxon>Bacillales</taxon>
        <taxon>Listeriaceae</taxon>
        <taxon>Listeria</taxon>
    </lineage>
</organism>
<keyword id="KW-0067">ATP-binding</keyword>
<keyword id="KW-0963">Cytoplasm</keyword>
<keyword id="KW-0436">Ligase</keyword>
<keyword id="KW-0460">Magnesium</keyword>
<keyword id="KW-0479">Metal-binding</keyword>
<keyword id="KW-0547">Nucleotide-binding</keyword>
<keyword id="KW-0658">Purine biosynthesis</keyword>
<gene>
    <name evidence="1" type="primary">purL</name>
    <name type="ordered locus">Lm4b_01783</name>
</gene>
<sequence>MPNMEPTTKEIKEQKIYQEMGLTDSEYELVCSILGREPNYTETGLFSVMWSEHCSYKNSKPVLRKFPTEGKQVLQGPGEGAGIVDIGDGLGVAFKVESHNHPSYVEPYQGAATGVGGIIRDVFSMGARPIAMLNSLRFGELDTPHAKYLVSEVVAGIAGYGNSIGIPTVGGEIQFDPCYTKNPLVNAMCVGLIEAKDIQKGQAKGIGNPVMYVGAKTGRDGIHGATFASVEFSEEGEQQRSAVQVGDPFMEKLLLEACLDVIRDHSDILVGIQDMGAAGLVSSSSEMASKAGAGLELIMDDVPQRELNMTPYEMLLSESQERMLLCVKKGHVEEIQALFERYGLEAVVIGQVTDDKMYKIIHHGEVVANVPVDALAEDAPVYHKPSKEPARYQAFQEEESFVPVMEDVVGVWKELLAQPTIASKRHIYEQYDYQVRTDTAVVPGSDAAIVRVRGTEKAIAMTTDCNSRYLYLDPEVGGAIAVAEAARNIVCSGGKPLAITDGLNFGNPEKPEIFWEIEKAADGISAACLELDTPVISGNVSLYNETDGTGIYPTPVIGMVGLVEDLAHITTQDFKNSGDVIFLIGETKAEYSGSELQKLQQGKISGRAPELDLTTEKKYQQLLLTAIQEGLVASSHDLAEGGFGVALAEATFKAGLGADVEVPFELNQLFSESQSRFLVSVKPENEAAFAQLMELEKVYRLGVVTEDDTIRVKHKEDQVTAKTTELRSIWEGAIPCLLK</sequence>
<protein>
    <recommendedName>
        <fullName evidence="1">Phosphoribosylformylglycinamidine synthase subunit PurL</fullName>
        <shortName evidence="1">FGAM synthase</shortName>
        <ecNumber evidence="1">6.3.5.3</ecNumber>
    </recommendedName>
    <alternativeName>
        <fullName evidence="1">Formylglycinamide ribonucleotide amidotransferase subunit II</fullName>
        <shortName evidence="1">FGAR amidotransferase II</shortName>
        <shortName evidence="1">FGAR-AT II</shortName>
    </alternativeName>
    <alternativeName>
        <fullName evidence="1">Glutamine amidotransferase PurL</fullName>
    </alternativeName>
    <alternativeName>
        <fullName evidence="1">Phosphoribosylformylglycinamidine synthase subunit II</fullName>
    </alternativeName>
</protein>
<accession>C1KW68</accession>